<comment type="function">
    <text evidence="1">Specifically methylates the N7 position of guanine in position 527 of 16S rRNA.</text>
</comment>
<comment type="catalytic activity">
    <reaction evidence="1">
        <text>guanosine(527) in 16S rRNA + S-adenosyl-L-methionine = N(7)-methylguanosine(527) in 16S rRNA + S-adenosyl-L-homocysteine</text>
        <dbReference type="Rhea" id="RHEA:42732"/>
        <dbReference type="Rhea" id="RHEA-COMP:10209"/>
        <dbReference type="Rhea" id="RHEA-COMP:10210"/>
        <dbReference type="ChEBI" id="CHEBI:57856"/>
        <dbReference type="ChEBI" id="CHEBI:59789"/>
        <dbReference type="ChEBI" id="CHEBI:74269"/>
        <dbReference type="ChEBI" id="CHEBI:74480"/>
        <dbReference type="EC" id="2.1.1.170"/>
    </reaction>
</comment>
<comment type="subcellular location">
    <subcellularLocation>
        <location evidence="1">Cytoplasm</location>
    </subcellularLocation>
</comment>
<comment type="similarity">
    <text evidence="1">Belongs to the methyltransferase superfamily. RNA methyltransferase RsmG family.</text>
</comment>
<protein>
    <recommendedName>
        <fullName evidence="1">Ribosomal RNA small subunit methyltransferase G</fullName>
        <ecNumber evidence="1">2.1.1.170</ecNumber>
    </recommendedName>
    <alternativeName>
        <fullName evidence="1">16S rRNA 7-methylguanosine methyltransferase</fullName>
        <shortName evidence="1">16S rRNA m7G methyltransferase</shortName>
    </alternativeName>
</protein>
<accession>A8F0G4</accession>
<name>RSMG_RICM5</name>
<sequence>MVMEVPREIIEKLEIFQKLVKKWNKSINLVSDNTIHNFWQRHILDSLQLIQYIDNKEIHLVDIGSGSGLPGIVLSIAGVAQVSLIEADLRKCIFLEKASKISNNNIQIINQRIEKIEIDCSILTCRAFSNLNTIFNCIKNISVREKFLLLKGKNYLTEIVEAKERWLFGYLIHQSITCEEGKILEVSNLTKMI</sequence>
<organism>
    <name type="scientific">Rickettsia massiliae (strain Mtu5)</name>
    <dbReference type="NCBI Taxonomy" id="416276"/>
    <lineage>
        <taxon>Bacteria</taxon>
        <taxon>Pseudomonadati</taxon>
        <taxon>Pseudomonadota</taxon>
        <taxon>Alphaproteobacteria</taxon>
        <taxon>Rickettsiales</taxon>
        <taxon>Rickettsiaceae</taxon>
        <taxon>Rickettsieae</taxon>
        <taxon>Rickettsia</taxon>
        <taxon>spotted fever group</taxon>
    </lineage>
</organism>
<keyword id="KW-0963">Cytoplasm</keyword>
<keyword id="KW-0489">Methyltransferase</keyword>
<keyword id="KW-0698">rRNA processing</keyword>
<keyword id="KW-0949">S-adenosyl-L-methionine</keyword>
<keyword id="KW-0808">Transferase</keyword>
<reference key="1">
    <citation type="journal article" date="2007" name="Genome Res.">
        <title>Lateral gene transfer between obligate intracellular bacteria: evidence from the Rickettsia massiliae genome.</title>
        <authorList>
            <person name="Blanc G."/>
            <person name="Ogata H."/>
            <person name="Robert C."/>
            <person name="Audic S."/>
            <person name="Claverie J.-M."/>
            <person name="Raoult D."/>
        </authorList>
    </citation>
    <scope>NUCLEOTIDE SEQUENCE [LARGE SCALE GENOMIC DNA]</scope>
    <source>
        <strain>Mtu5</strain>
    </source>
</reference>
<evidence type="ECO:0000255" key="1">
    <source>
        <dbReference type="HAMAP-Rule" id="MF_00074"/>
    </source>
</evidence>
<feature type="chain" id="PRO_0000335417" description="Ribosomal RNA small subunit methyltransferase G">
    <location>
        <begin position="1"/>
        <end position="193"/>
    </location>
</feature>
<feature type="binding site" evidence="1">
    <location>
        <position position="64"/>
    </location>
    <ligand>
        <name>S-adenosyl-L-methionine</name>
        <dbReference type="ChEBI" id="CHEBI:59789"/>
    </ligand>
</feature>
<feature type="binding site" evidence="1">
    <location>
        <position position="69"/>
    </location>
    <ligand>
        <name>S-adenosyl-L-methionine</name>
        <dbReference type="ChEBI" id="CHEBI:59789"/>
    </ligand>
</feature>
<feature type="binding site" evidence="1">
    <location>
        <begin position="113"/>
        <end position="114"/>
    </location>
    <ligand>
        <name>S-adenosyl-L-methionine</name>
        <dbReference type="ChEBI" id="CHEBI:59789"/>
    </ligand>
</feature>
<feature type="binding site" evidence="1">
    <location>
        <position position="126"/>
    </location>
    <ligand>
        <name>S-adenosyl-L-methionine</name>
        <dbReference type="ChEBI" id="CHEBI:59789"/>
    </ligand>
</feature>
<dbReference type="EC" id="2.1.1.170" evidence="1"/>
<dbReference type="EMBL" id="CP000683">
    <property type="protein sequence ID" value="ABV84400.1"/>
    <property type="molecule type" value="Genomic_DNA"/>
</dbReference>
<dbReference type="SMR" id="A8F0G4"/>
<dbReference type="KEGG" id="rms:RMA_0092"/>
<dbReference type="HOGENOM" id="CLU_065341_1_1_5"/>
<dbReference type="Proteomes" id="UP000001311">
    <property type="component" value="Chromosome"/>
</dbReference>
<dbReference type="GO" id="GO:0005829">
    <property type="term" value="C:cytosol"/>
    <property type="evidence" value="ECO:0007669"/>
    <property type="project" value="TreeGrafter"/>
</dbReference>
<dbReference type="GO" id="GO:0070043">
    <property type="term" value="F:rRNA (guanine-N7-)-methyltransferase activity"/>
    <property type="evidence" value="ECO:0007669"/>
    <property type="project" value="UniProtKB-UniRule"/>
</dbReference>
<dbReference type="Gene3D" id="3.40.50.150">
    <property type="entry name" value="Vaccinia Virus protein VP39"/>
    <property type="match status" value="1"/>
</dbReference>
<dbReference type="HAMAP" id="MF_00074">
    <property type="entry name" value="16SrRNA_methyltr_G"/>
    <property type="match status" value="1"/>
</dbReference>
<dbReference type="InterPro" id="IPR003682">
    <property type="entry name" value="rRNA_ssu_MeTfrase_G"/>
</dbReference>
<dbReference type="InterPro" id="IPR029063">
    <property type="entry name" value="SAM-dependent_MTases_sf"/>
</dbReference>
<dbReference type="NCBIfam" id="TIGR00138">
    <property type="entry name" value="rsmG_gidB"/>
    <property type="match status" value="1"/>
</dbReference>
<dbReference type="PANTHER" id="PTHR31760">
    <property type="entry name" value="S-ADENOSYL-L-METHIONINE-DEPENDENT METHYLTRANSFERASES SUPERFAMILY PROTEIN"/>
    <property type="match status" value="1"/>
</dbReference>
<dbReference type="PANTHER" id="PTHR31760:SF0">
    <property type="entry name" value="S-ADENOSYL-L-METHIONINE-DEPENDENT METHYLTRANSFERASES SUPERFAMILY PROTEIN"/>
    <property type="match status" value="1"/>
</dbReference>
<dbReference type="Pfam" id="PF02527">
    <property type="entry name" value="GidB"/>
    <property type="match status" value="1"/>
</dbReference>
<dbReference type="PIRSF" id="PIRSF003078">
    <property type="entry name" value="GidB"/>
    <property type="match status" value="1"/>
</dbReference>
<dbReference type="SUPFAM" id="SSF53335">
    <property type="entry name" value="S-adenosyl-L-methionine-dependent methyltransferases"/>
    <property type="match status" value="1"/>
</dbReference>
<proteinExistence type="inferred from homology"/>
<gene>
    <name evidence="1" type="primary">rsmG</name>
    <name type="ordered locus">RMA_0092</name>
</gene>